<feature type="chain" id="PRO_0000228549" description="Ribonuclease 3">
    <location>
        <begin position="1"/>
        <end position="237"/>
    </location>
</feature>
<feature type="domain" description="RNase III" evidence="1">
    <location>
        <begin position="3"/>
        <end position="133"/>
    </location>
</feature>
<feature type="domain" description="DRBM" evidence="1">
    <location>
        <begin position="160"/>
        <end position="228"/>
    </location>
</feature>
<feature type="active site" evidence="1">
    <location>
        <position position="47"/>
    </location>
</feature>
<feature type="active site" evidence="1">
    <location>
        <position position="122"/>
    </location>
</feature>
<feature type="binding site" evidence="1">
    <location>
        <position position="43"/>
    </location>
    <ligand>
        <name>Mg(2+)</name>
        <dbReference type="ChEBI" id="CHEBI:18420"/>
    </ligand>
</feature>
<feature type="binding site" evidence="1">
    <location>
        <position position="119"/>
    </location>
    <ligand>
        <name>Mg(2+)</name>
        <dbReference type="ChEBI" id="CHEBI:18420"/>
    </ligand>
</feature>
<feature type="binding site" evidence="1">
    <location>
        <position position="122"/>
    </location>
    <ligand>
        <name>Mg(2+)</name>
        <dbReference type="ChEBI" id="CHEBI:18420"/>
    </ligand>
</feature>
<sequence length="237" mass="24889">MSSRQPLLDALGVELPDELLSLALTHRSYAYEHGGLPTNERLEFLGDAVLGLTITDALYHRHPDRTEGDLAKLRASVVNTQALADVARKLCDGGLGAHLLLGRGEANTGGADKSSILADGMESLLGAIYLQHGIDTAREVILRLFGALLDAAPTLGAGLDWKTSLQELTAARGMGAPSYLVTSTGPDHDKEFTAVVVVADTEYGTGVGRSKKEAEQKAAAATWKALDVLDSAAQTSA</sequence>
<proteinExistence type="inferred from homology"/>
<keyword id="KW-0963">Cytoplasm</keyword>
<keyword id="KW-0255">Endonuclease</keyword>
<keyword id="KW-0378">Hydrolase</keyword>
<keyword id="KW-0460">Magnesium</keyword>
<keyword id="KW-0479">Metal-binding</keyword>
<keyword id="KW-0507">mRNA processing</keyword>
<keyword id="KW-0540">Nuclease</keyword>
<keyword id="KW-1185">Reference proteome</keyword>
<keyword id="KW-0694">RNA-binding</keyword>
<keyword id="KW-0698">rRNA processing</keyword>
<keyword id="KW-0699">rRNA-binding</keyword>
<keyword id="KW-0819">tRNA processing</keyword>
<reference key="1">
    <citation type="journal article" date="2005" name="Proc. Natl. Acad. Sci. U.S.A.">
        <title>The complete genome sequence of Mycobacterium avium subspecies paratuberculosis.</title>
        <authorList>
            <person name="Li L."/>
            <person name="Bannantine J.P."/>
            <person name="Zhang Q."/>
            <person name="Amonsin A."/>
            <person name="May B.J."/>
            <person name="Alt D."/>
            <person name="Banerji N."/>
            <person name="Kanjilal S."/>
            <person name="Kapur V."/>
        </authorList>
    </citation>
    <scope>NUCLEOTIDE SEQUENCE [LARGE SCALE GENOMIC DNA]</scope>
    <source>
        <strain>ATCC BAA-968 / K-10</strain>
    </source>
</reference>
<protein>
    <recommendedName>
        <fullName evidence="1">Ribonuclease 3</fullName>
        <ecNumber evidence="1">3.1.26.3</ecNumber>
    </recommendedName>
    <alternativeName>
        <fullName evidence="1">Ribonuclease III</fullName>
        <shortName evidence="1">RNase III</shortName>
    </alternativeName>
</protein>
<organism>
    <name type="scientific">Mycolicibacterium paratuberculosis (strain ATCC BAA-968 / K-10)</name>
    <name type="common">Mycobacterium paratuberculosis</name>
    <dbReference type="NCBI Taxonomy" id="262316"/>
    <lineage>
        <taxon>Bacteria</taxon>
        <taxon>Bacillati</taxon>
        <taxon>Actinomycetota</taxon>
        <taxon>Actinomycetes</taxon>
        <taxon>Mycobacteriales</taxon>
        <taxon>Mycobacteriaceae</taxon>
        <taxon>Mycobacterium</taxon>
        <taxon>Mycobacterium avium complex (MAC)</taxon>
    </lineage>
</organism>
<accession>Q73VL8</accession>
<evidence type="ECO:0000255" key="1">
    <source>
        <dbReference type="HAMAP-Rule" id="MF_00104"/>
    </source>
</evidence>
<comment type="function">
    <text evidence="1">Digests double-stranded RNA. Involved in the processing of primary rRNA transcript to yield the immediate precursors to the large and small rRNAs (23S and 16S). Processes some mRNAs, and tRNAs when they are encoded in the rRNA operon. Processes pre-crRNA and tracrRNA of type II CRISPR loci if present in the organism.</text>
</comment>
<comment type="catalytic activity">
    <reaction evidence="1">
        <text>Endonucleolytic cleavage to 5'-phosphomonoester.</text>
        <dbReference type="EC" id="3.1.26.3"/>
    </reaction>
</comment>
<comment type="cofactor">
    <cofactor evidence="1">
        <name>Mg(2+)</name>
        <dbReference type="ChEBI" id="CHEBI:18420"/>
    </cofactor>
</comment>
<comment type="subunit">
    <text evidence="1">Homodimer.</text>
</comment>
<comment type="subcellular location">
    <subcellularLocation>
        <location evidence="1">Cytoplasm</location>
    </subcellularLocation>
</comment>
<comment type="similarity">
    <text evidence="1">Belongs to the ribonuclease III family.</text>
</comment>
<name>RNC_MYCPA</name>
<gene>
    <name evidence="1" type="primary">rnc</name>
    <name type="ordered locus">MAP_2995c</name>
</gene>
<dbReference type="EC" id="3.1.26.3" evidence="1"/>
<dbReference type="EMBL" id="AE016958">
    <property type="protein sequence ID" value="AAS05312.1"/>
    <property type="molecule type" value="Genomic_DNA"/>
</dbReference>
<dbReference type="RefSeq" id="WP_003878728.1">
    <property type="nucleotide sequence ID" value="NZ_CP106873.1"/>
</dbReference>
<dbReference type="SMR" id="Q73VL8"/>
<dbReference type="STRING" id="262316.MAP_2995c"/>
<dbReference type="KEGG" id="mpa:MAP_2995c"/>
<dbReference type="PATRIC" id="fig|262316.17.peg.3172"/>
<dbReference type="eggNOG" id="COG0571">
    <property type="taxonomic scope" value="Bacteria"/>
</dbReference>
<dbReference type="HOGENOM" id="CLU_000907_1_2_11"/>
<dbReference type="Proteomes" id="UP000000580">
    <property type="component" value="Chromosome"/>
</dbReference>
<dbReference type="GO" id="GO:0005737">
    <property type="term" value="C:cytoplasm"/>
    <property type="evidence" value="ECO:0007669"/>
    <property type="project" value="UniProtKB-SubCell"/>
</dbReference>
<dbReference type="GO" id="GO:0003725">
    <property type="term" value="F:double-stranded RNA binding"/>
    <property type="evidence" value="ECO:0007669"/>
    <property type="project" value="TreeGrafter"/>
</dbReference>
<dbReference type="GO" id="GO:0046872">
    <property type="term" value="F:metal ion binding"/>
    <property type="evidence" value="ECO:0007669"/>
    <property type="project" value="UniProtKB-KW"/>
</dbReference>
<dbReference type="GO" id="GO:0004525">
    <property type="term" value="F:ribonuclease III activity"/>
    <property type="evidence" value="ECO:0007669"/>
    <property type="project" value="UniProtKB-UniRule"/>
</dbReference>
<dbReference type="GO" id="GO:0019843">
    <property type="term" value="F:rRNA binding"/>
    <property type="evidence" value="ECO:0007669"/>
    <property type="project" value="UniProtKB-KW"/>
</dbReference>
<dbReference type="GO" id="GO:0006397">
    <property type="term" value="P:mRNA processing"/>
    <property type="evidence" value="ECO:0007669"/>
    <property type="project" value="UniProtKB-UniRule"/>
</dbReference>
<dbReference type="GO" id="GO:0010468">
    <property type="term" value="P:regulation of gene expression"/>
    <property type="evidence" value="ECO:0007669"/>
    <property type="project" value="TreeGrafter"/>
</dbReference>
<dbReference type="GO" id="GO:0006364">
    <property type="term" value="P:rRNA processing"/>
    <property type="evidence" value="ECO:0007669"/>
    <property type="project" value="UniProtKB-UniRule"/>
</dbReference>
<dbReference type="GO" id="GO:0008033">
    <property type="term" value="P:tRNA processing"/>
    <property type="evidence" value="ECO:0007669"/>
    <property type="project" value="UniProtKB-KW"/>
</dbReference>
<dbReference type="CDD" id="cd10845">
    <property type="entry name" value="DSRM_RNAse_III_family"/>
    <property type="match status" value="1"/>
</dbReference>
<dbReference type="CDD" id="cd00593">
    <property type="entry name" value="RIBOc"/>
    <property type="match status" value="1"/>
</dbReference>
<dbReference type="FunFam" id="1.10.1520.10:FF:000001">
    <property type="entry name" value="Ribonuclease 3"/>
    <property type="match status" value="1"/>
</dbReference>
<dbReference type="FunFam" id="3.30.160.20:FF:000003">
    <property type="entry name" value="Ribonuclease 3"/>
    <property type="match status" value="1"/>
</dbReference>
<dbReference type="Gene3D" id="3.30.160.20">
    <property type="match status" value="1"/>
</dbReference>
<dbReference type="Gene3D" id="1.10.1520.10">
    <property type="entry name" value="Ribonuclease III domain"/>
    <property type="match status" value="1"/>
</dbReference>
<dbReference type="HAMAP" id="MF_00104">
    <property type="entry name" value="RNase_III"/>
    <property type="match status" value="1"/>
</dbReference>
<dbReference type="InterPro" id="IPR014720">
    <property type="entry name" value="dsRBD_dom"/>
</dbReference>
<dbReference type="InterPro" id="IPR011907">
    <property type="entry name" value="RNase_III"/>
</dbReference>
<dbReference type="InterPro" id="IPR000999">
    <property type="entry name" value="RNase_III_dom"/>
</dbReference>
<dbReference type="InterPro" id="IPR036389">
    <property type="entry name" value="RNase_III_sf"/>
</dbReference>
<dbReference type="NCBIfam" id="TIGR02191">
    <property type="entry name" value="RNaseIII"/>
    <property type="match status" value="1"/>
</dbReference>
<dbReference type="PANTHER" id="PTHR11207:SF0">
    <property type="entry name" value="RIBONUCLEASE 3"/>
    <property type="match status" value="1"/>
</dbReference>
<dbReference type="PANTHER" id="PTHR11207">
    <property type="entry name" value="RIBONUCLEASE III"/>
    <property type="match status" value="1"/>
</dbReference>
<dbReference type="Pfam" id="PF00035">
    <property type="entry name" value="dsrm"/>
    <property type="match status" value="1"/>
</dbReference>
<dbReference type="Pfam" id="PF14622">
    <property type="entry name" value="Ribonucleas_3_3"/>
    <property type="match status" value="1"/>
</dbReference>
<dbReference type="SMART" id="SM00358">
    <property type="entry name" value="DSRM"/>
    <property type="match status" value="1"/>
</dbReference>
<dbReference type="SMART" id="SM00535">
    <property type="entry name" value="RIBOc"/>
    <property type="match status" value="1"/>
</dbReference>
<dbReference type="SUPFAM" id="SSF54768">
    <property type="entry name" value="dsRNA-binding domain-like"/>
    <property type="match status" value="1"/>
</dbReference>
<dbReference type="SUPFAM" id="SSF69065">
    <property type="entry name" value="RNase III domain-like"/>
    <property type="match status" value="1"/>
</dbReference>
<dbReference type="PROSITE" id="PS50137">
    <property type="entry name" value="DS_RBD"/>
    <property type="match status" value="1"/>
</dbReference>
<dbReference type="PROSITE" id="PS00517">
    <property type="entry name" value="RNASE_3_1"/>
    <property type="match status" value="1"/>
</dbReference>
<dbReference type="PROSITE" id="PS50142">
    <property type="entry name" value="RNASE_3_2"/>
    <property type="match status" value="1"/>
</dbReference>